<organism>
    <name type="scientific">Streptococcus mutans serotype c (strain ATCC 700610 / UA159)</name>
    <dbReference type="NCBI Taxonomy" id="210007"/>
    <lineage>
        <taxon>Bacteria</taxon>
        <taxon>Bacillati</taxon>
        <taxon>Bacillota</taxon>
        <taxon>Bacilli</taxon>
        <taxon>Lactobacillales</taxon>
        <taxon>Streptococcaceae</taxon>
        <taxon>Streptococcus</taxon>
    </lineage>
</organism>
<name>KPRS2_STRMU</name>
<protein>
    <recommendedName>
        <fullName evidence="1">Putative ribose-phosphate pyrophosphokinase 2</fullName>
        <shortName evidence="1">RPPK 2</shortName>
        <ecNumber evidence="1">2.7.6.1</ecNumber>
    </recommendedName>
    <alternativeName>
        <fullName evidence="1">5-phospho-D-ribosyl alpha-1-diphosphate synthase 2</fullName>
    </alternativeName>
    <alternativeName>
        <fullName evidence="1">Phosphoribosyl diphosphate synthase 2</fullName>
    </alternativeName>
    <alternativeName>
        <fullName evidence="1">Phosphoribosyl pyrophosphate synthase 2</fullName>
        <shortName evidence="1">P-Rib-PP synthase 2</shortName>
        <shortName evidence="1">PRPP synthase 2</shortName>
        <shortName evidence="1">PRPPase 2</shortName>
    </alternativeName>
</protein>
<accession>Q8DU94</accession>
<comment type="function">
    <text evidence="1">Involved in the biosynthesis of the central metabolite phospho-alpha-D-ribosyl-1-pyrophosphate (PRPP) via the transfer of pyrophosphoryl group from ATP to 1-hydroxyl of ribose-5-phosphate (Rib-5-P).</text>
</comment>
<comment type="catalytic activity">
    <reaction evidence="1">
        <text>D-ribose 5-phosphate + ATP = 5-phospho-alpha-D-ribose 1-diphosphate + AMP + H(+)</text>
        <dbReference type="Rhea" id="RHEA:15609"/>
        <dbReference type="ChEBI" id="CHEBI:15378"/>
        <dbReference type="ChEBI" id="CHEBI:30616"/>
        <dbReference type="ChEBI" id="CHEBI:58017"/>
        <dbReference type="ChEBI" id="CHEBI:78346"/>
        <dbReference type="ChEBI" id="CHEBI:456215"/>
        <dbReference type="EC" id="2.7.6.1"/>
    </reaction>
</comment>
<comment type="cofactor">
    <cofactor evidence="1">
        <name>Mg(2+)</name>
        <dbReference type="ChEBI" id="CHEBI:18420"/>
    </cofactor>
    <text evidence="1">Binds 1 Mg(2+) ion per subunit.</text>
</comment>
<comment type="pathway">
    <text evidence="1">Metabolic intermediate biosynthesis; 5-phospho-alpha-D-ribose 1-diphosphate biosynthesis; 5-phospho-alpha-D-ribose 1-diphosphate from D-ribose 5-phosphate (route I): step 1/1.</text>
</comment>
<comment type="subunit">
    <text evidence="1">Homohexamer.</text>
</comment>
<comment type="subcellular location">
    <subcellularLocation>
        <location evidence="1">Cytoplasm</location>
    </subcellularLocation>
</comment>
<comment type="similarity">
    <text evidence="1">Belongs to the ribose-phosphate pyrophosphokinase family. Class I subfamily.</text>
</comment>
<comment type="caution">
    <text evidence="1">Part of a set of proteins in which some residues (ACT_SITE, NP_BIND, REGION and BINDING) are not conserved.</text>
</comment>
<reference key="1">
    <citation type="journal article" date="2002" name="Proc. Natl. Acad. Sci. U.S.A.">
        <title>Genome sequence of Streptococcus mutans UA159, a cariogenic dental pathogen.</title>
        <authorList>
            <person name="Ajdic D.J."/>
            <person name="McShan W.M."/>
            <person name="McLaughlin R.E."/>
            <person name="Savic G."/>
            <person name="Chang J."/>
            <person name="Carson M.B."/>
            <person name="Primeaux C."/>
            <person name="Tian R."/>
            <person name="Kenton S."/>
            <person name="Jia H.G."/>
            <person name="Lin S.P."/>
            <person name="Qian Y."/>
            <person name="Li S."/>
            <person name="Zhu H."/>
            <person name="Najar F.Z."/>
            <person name="Lai H."/>
            <person name="White J."/>
            <person name="Roe B.A."/>
            <person name="Ferretti J.J."/>
        </authorList>
    </citation>
    <scope>NUCLEOTIDE SEQUENCE [LARGE SCALE GENOMIC DNA]</scope>
    <source>
        <strain>ATCC 700610 / UA159</strain>
    </source>
</reference>
<dbReference type="EC" id="2.7.6.1" evidence="1"/>
<dbReference type="EMBL" id="AE014133">
    <property type="protein sequence ID" value="AAN58748.1"/>
    <property type="molecule type" value="Genomic_DNA"/>
</dbReference>
<dbReference type="RefSeq" id="NP_721442.1">
    <property type="nucleotide sequence ID" value="NC_004350.2"/>
</dbReference>
<dbReference type="RefSeq" id="WP_002263830.1">
    <property type="nucleotide sequence ID" value="NC_004350.2"/>
</dbReference>
<dbReference type="SMR" id="Q8DU94"/>
<dbReference type="STRING" id="210007.SMU_1050"/>
<dbReference type="KEGG" id="smu:SMU_1050"/>
<dbReference type="PATRIC" id="fig|210007.7.peg.938"/>
<dbReference type="eggNOG" id="COG0462">
    <property type="taxonomic scope" value="Bacteria"/>
</dbReference>
<dbReference type="HOGENOM" id="CLU_033546_2_0_9"/>
<dbReference type="OrthoDB" id="9777067at2"/>
<dbReference type="PhylomeDB" id="Q8DU94"/>
<dbReference type="UniPathway" id="UPA00087">
    <property type="reaction ID" value="UER00172"/>
</dbReference>
<dbReference type="Proteomes" id="UP000002512">
    <property type="component" value="Chromosome"/>
</dbReference>
<dbReference type="GO" id="GO:0005737">
    <property type="term" value="C:cytoplasm"/>
    <property type="evidence" value="ECO:0007669"/>
    <property type="project" value="UniProtKB-SubCell"/>
</dbReference>
<dbReference type="GO" id="GO:0002189">
    <property type="term" value="C:ribose phosphate diphosphokinase complex"/>
    <property type="evidence" value="ECO:0007669"/>
    <property type="project" value="TreeGrafter"/>
</dbReference>
<dbReference type="GO" id="GO:0005524">
    <property type="term" value="F:ATP binding"/>
    <property type="evidence" value="ECO:0007669"/>
    <property type="project" value="UniProtKB-KW"/>
</dbReference>
<dbReference type="GO" id="GO:0016301">
    <property type="term" value="F:kinase activity"/>
    <property type="evidence" value="ECO:0007669"/>
    <property type="project" value="UniProtKB-KW"/>
</dbReference>
<dbReference type="GO" id="GO:0000287">
    <property type="term" value="F:magnesium ion binding"/>
    <property type="evidence" value="ECO:0007669"/>
    <property type="project" value="UniProtKB-UniRule"/>
</dbReference>
<dbReference type="GO" id="GO:0004749">
    <property type="term" value="F:ribose phosphate diphosphokinase activity"/>
    <property type="evidence" value="ECO:0007669"/>
    <property type="project" value="UniProtKB-UniRule"/>
</dbReference>
<dbReference type="GO" id="GO:0006015">
    <property type="term" value="P:5-phosphoribose 1-diphosphate biosynthetic process"/>
    <property type="evidence" value="ECO:0007669"/>
    <property type="project" value="UniProtKB-UniRule"/>
</dbReference>
<dbReference type="GO" id="GO:0006164">
    <property type="term" value="P:purine nucleotide biosynthetic process"/>
    <property type="evidence" value="ECO:0007669"/>
    <property type="project" value="TreeGrafter"/>
</dbReference>
<dbReference type="GO" id="GO:0009156">
    <property type="term" value="P:ribonucleoside monophosphate biosynthetic process"/>
    <property type="evidence" value="ECO:0007669"/>
    <property type="project" value="InterPro"/>
</dbReference>
<dbReference type="CDD" id="cd06223">
    <property type="entry name" value="PRTases_typeI"/>
    <property type="match status" value="1"/>
</dbReference>
<dbReference type="FunFam" id="3.40.50.2020:FF:000001">
    <property type="entry name" value="Ribose-phosphate pyrophosphokinase"/>
    <property type="match status" value="1"/>
</dbReference>
<dbReference type="Gene3D" id="3.40.50.2020">
    <property type="match status" value="2"/>
</dbReference>
<dbReference type="HAMAP" id="MF_00583_B">
    <property type="entry name" value="RibP_PPkinase_B"/>
    <property type="match status" value="1"/>
</dbReference>
<dbReference type="InterPro" id="IPR000842">
    <property type="entry name" value="PRib_PP_synth_CS"/>
</dbReference>
<dbReference type="InterPro" id="IPR029099">
    <property type="entry name" value="Pribosyltran_N"/>
</dbReference>
<dbReference type="InterPro" id="IPR000836">
    <property type="entry name" value="PRibTrfase_dom"/>
</dbReference>
<dbReference type="InterPro" id="IPR029057">
    <property type="entry name" value="PRTase-like"/>
</dbReference>
<dbReference type="InterPro" id="IPR005946">
    <property type="entry name" value="Rib-P_diPkinase"/>
</dbReference>
<dbReference type="InterPro" id="IPR037515">
    <property type="entry name" value="Rib-P_diPkinase_bac"/>
</dbReference>
<dbReference type="NCBIfam" id="NF002320">
    <property type="entry name" value="PRK01259.1"/>
    <property type="match status" value="1"/>
</dbReference>
<dbReference type="NCBIfam" id="NF002686">
    <property type="entry name" value="PRK02458.1"/>
    <property type="match status" value="1"/>
</dbReference>
<dbReference type="NCBIfam" id="TIGR01251">
    <property type="entry name" value="ribP_PPkin"/>
    <property type="match status" value="1"/>
</dbReference>
<dbReference type="PANTHER" id="PTHR10210">
    <property type="entry name" value="RIBOSE-PHOSPHATE DIPHOSPHOKINASE FAMILY MEMBER"/>
    <property type="match status" value="1"/>
</dbReference>
<dbReference type="PANTHER" id="PTHR10210:SF41">
    <property type="entry name" value="RIBOSE-PHOSPHATE PYROPHOSPHOKINASE 1, CHLOROPLASTIC"/>
    <property type="match status" value="1"/>
</dbReference>
<dbReference type="Pfam" id="PF14572">
    <property type="entry name" value="Pribosyl_synth"/>
    <property type="match status" value="1"/>
</dbReference>
<dbReference type="Pfam" id="PF13793">
    <property type="entry name" value="Pribosyltran_N"/>
    <property type="match status" value="1"/>
</dbReference>
<dbReference type="SMART" id="SM01400">
    <property type="entry name" value="Pribosyltran_N"/>
    <property type="match status" value="1"/>
</dbReference>
<dbReference type="SUPFAM" id="SSF53271">
    <property type="entry name" value="PRTase-like"/>
    <property type="match status" value="2"/>
</dbReference>
<dbReference type="PROSITE" id="PS00114">
    <property type="entry name" value="PRPP_SYNTHASE"/>
    <property type="match status" value="1"/>
</dbReference>
<keyword id="KW-0067">ATP-binding</keyword>
<keyword id="KW-0963">Cytoplasm</keyword>
<keyword id="KW-0418">Kinase</keyword>
<keyword id="KW-0460">Magnesium</keyword>
<keyword id="KW-0479">Metal-binding</keyword>
<keyword id="KW-0545">Nucleotide biosynthesis</keyword>
<keyword id="KW-0547">Nucleotide-binding</keyword>
<keyword id="KW-1185">Reference proteome</keyword>
<keyword id="KW-0808">Transferase</keyword>
<gene>
    <name evidence="1" type="primary">prs2</name>
    <name type="ordered locus">SMU_1050</name>
</gene>
<evidence type="ECO:0000255" key="1">
    <source>
        <dbReference type="HAMAP-Rule" id="MF_00583"/>
    </source>
</evidence>
<sequence length="326" mass="35671">MSNAYPDKHLKLFSLTSNTAIAEKIAKVVGVPLGKLSSRQFSDGEIMINIEESVRGNDIYVIQSTSYPVNNHLWELLIMVDACKRASANSVNVVIPYFGYSRQDRIAAAREPITAKLVANMLVKAGVDRVLTLDLHAVQVQGFFDIPVDNLFTTPLFADHYTNLGLYGEDIVVVSPKNSGIKRARSLAQYLDAPIAIIDYAQDDDSSREEGYIIGEVAGKKAILIDDILNTGKTFAESAKIVERGGATEIYAVASHGLFASGATEILQAAPIKDILITDSVYTEQELPSNLHYLSASELIGEAIIRIHERRPVSPLFAYNRKGDEA</sequence>
<feature type="chain" id="PRO_0000141203" description="Putative ribose-phosphate pyrophosphokinase 2">
    <location>
        <begin position="1"/>
        <end position="326"/>
    </location>
</feature>
<feature type="binding site" evidence="1">
    <location>
        <begin position="43"/>
        <end position="45"/>
    </location>
    <ligand>
        <name>ATP</name>
        <dbReference type="ChEBI" id="CHEBI:30616"/>
    </ligand>
</feature>
<feature type="binding site" evidence="1">
    <location>
        <begin position="102"/>
        <end position="103"/>
    </location>
    <ligand>
        <name>ATP</name>
        <dbReference type="ChEBI" id="CHEBI:30616"/>
    </ligand>
</feature>
<feature type="binding site" evidence="1">
    <location>
        <position position="136"/>
    </location>
    <ligand>
        <name>Mg(2+)</name>
        <dbReference type="ChEBI" id="CHEBI:18420"/>
    </ligand>
</feature>
<feature type="binding site" evidence="1">
    <location>
        <position position="226"/>
    </location>
    <ligand>
        <name>D-ribose 5-phosphate</name>
        <dbReference type="ChEBI" id="CHEBI:78346"/>
    </ligand>
</feature>
<feature type="binding site" evidence="1">
    <location>
        <begin position="230"/>
        <end position="234"/>
    </location>
    <ligand>
        <name>D-ribose 5-phosphate</name>
        <dbReference type="ChEBI" id="CHEBI:78346"/>
    </ligand>
</feature>
<proteinExistence type="inferred from homology"/>